<reference key="1">
    <citation type="journal article" date="2001" name="Fish. Sci.">
        <title>Primary and secondary structures of grammistins, peptide toxins isolated from the skin secretion of the soapfish Pogonoperca punctata.</title>
        <authorList>
            <person name="Shiomi K."/>
            <person name="Yokota H."/>
            <person name="Nagashima Y."/>
            <person name="Ishida M."/>
        </authorList>
    </citation>
    <scope>PROTEIN SEQUENCE</scope>
    <scope>MASS SPECTROMETRY</scope>
    <scope>TOXIC DOSE</scope>
    <source>
        <tissue>Skin secretion</tissue>
    </source>
</reference>
<reference key="2">
    <citation type="journal article" date="2001" name="Fish. Sci.">
        <title>Interaction of grammistins with lipids and their antibacterial activity.</title>
        <authorList>
            <person name="Yokota H."/>
            <person name="Nagashima Y."/>
            <person name="Shiomi K."/>
        </authorList>
    </citation>
    <scope>FUNCTION</scope>
</reference>
<protein>
    <recommendedName>
        <fullName>Grammistin Pp 1</fullName>
    </recommendedName>
</protein>
<feature type="peptide" id="PRO_0000044525" description="Grammistin Pp 1">
    <location>
        <begin position="1"/>
        <end position="13"/>
    </location>
</feature>
<sequence length="13" mass="1545">FIGGIISFFKRLF</sequence>
<organism>
    <name type="scientific">Pogonoperca punctata</name>
    <name type="common">Clown grouper</name>
    <name type="synonym">Grammistes punctatus</name>
    <dbReference type="NCBI Taxonomy" id="160738"/>
    <lineage>
        <taxon>Eukaryota</taxon>
        <taxon>Metazoa</taxon>
        <taxon>Chordata</taxon>
        <taxon>Craniata</taxon>
        <taxon>Vertebrata</taxon>
        <taxon>Euteleostomi</taxon>
        <taxon>Actinopterygii</taxon>
        <taxon>Neopterygii</taxon>
        <taxon>Teleostei</taxon>
        <taxon>Neoteleostei</taxon>
        <taxon>Acanthomorphata</taxon>
        <taxon>Eupercaria</taxon>
        <taxon>Perciformes</taxon>
        <taxon>Serranoidei</taxon>
        <taxon>Serranidae</taxon>
        <taxon>Epinephelinae</taxon>
        <taxon>Grammistini</taxon>
        <taxon>Pogonoperca</taxon>
    </lineage>
</organism>
<comment type="function">
    <text evidence="2">Has lytic and hemolytic activities. Its hemolytic activity is inhibited by phospholipids, but not by cholesterol. Has antibacterial activity with a broad spectrum against various species of bacteria including both Gram-positive and Gram-negative groups. Has ichthyotoxic activity.</text>
</comment>
<comment type="subunit">
    <text evidence="3">Exists as aggregates of 3-4 molecules.</text>
</comment>
<comment type="subcellular location">
    <subcellularLocation>
        <location>Secreted</location>
    </subcellularLocation>
</comment>
<comment type="tissue specificity">
    <text>Expressed by the skin glands.</text>
</comment>
<comment type="mass spectrometry" mass="1544.0" method="MALDI" evidence="1"/>
<comment type="toxic dose">
    <text>LD(50) is 4.0 ug/ml against killifish.</text>
</comment>
<comment type="similarity">
    <text evidence="3">Belongs to the grammistin family. Group 2 subfamily.</text>
</comment>
<proteinExistence type="evidence at protein level"/>
<accession>P69842</accession>
<evidence type="ECO:0000269" key="1">
    <source ref="1"/>
</evidence>
<evidence type="ECO:0000269" key="2">
    <source ref="2"/>
</evidence>
<evidence type="ECO:0000305" key="3"/>
<name>GRA1_POGPU</name>
<keyword id="KW-0044">Antibiotic</keyword>
<keyword id="KW-0929">Antimicrobial</keyword>
<keyword id="KW-0204">Cytolysis</keyword>
<keyword id="KW-0903">Direct protein sequencing</keyword>
<keyword id="KW-0354">Hemolysis</keyword>
<keyword id="KW-0964">Secreted</keyword>
<keyword id="KW-0800">Toxin</keyword>
<dbReference type="GO" id="GO:0005576">
    <property type="term" value="C:extracellular region"/>
    <property type="evidence" value="ECO:0007669"/>
    <property type="project" value="UniProtKB-SubCell"/>
</dbReference>
<dbReference type="GO" id="GO:0090729">
    <property type="term" value="F:toxin activity"/>
    <property type="evidence" value="ECO:0007669"/>
    <property type="project" value="UniProtKB-KW"/>
</dbReference>
<dbReference type="GO" id="GO:0042742">
    <property type="term" value="P:defense response to bacterium"/>
    <property type="evidence" value="ECO:0007669"/>
    <property type="project" value="UniProtKB-KW"/>
</dbReference>
<dbReference type="GO" id="GO:0031640">
    <property type="term" value="P:killing of cells of another organism"/>
    <property type="evidence" value="ECO:0007669"/>
    <property type="project" value="UniProtKB-KW"/>
</dbReference>